<keyword id="KW-0963">Cytoplasm</keyword>
<keyword id="KW-0804">Transcription</keyword>
<keyword id="KW-0805">Transcription regulation</keyword>
<organism>
    <name type="scientific">Salmonella paratyphi B (strain ATCC BAA-1250 / SPB7)</name>
    <dbReference type="NCBI Taxonomy" id="1016998"/>
    <lineage>
        <taxon>Bacteria</taxon>
        <taxon>Pseudomonadati</taxon>
        <taxon>Pseudomonadota</taxon>
        <taxon>Gammaproteobacteria</taxon>
        <taxon>Enterobacterales</taxon>
        <taxon>Enterobacteriaceae</taxon>
        <taxon>Salmonella</taxon>
    </lineage>
</organism>
<feature type="chain" id="PRO_1000085446" description="Regulator of sigma D">
    <location>
        <begin position="1"/>
        <end position="162"/>
    </location>
</feature>
<proteinExistence type="inferred from homology"/>
<protein>
    <recommendedName>
        <fullName evidence="1">Regulator of sigma D</fullName>
    </recommendedName>
</protein>
<gene>
    <name evidence="1" type="primary">rsd</name>
    <name type="ordered locus">SPAB_05155</name>
</gene>
<accession>A9N0K7</accession>
<dbReference type="EMBL" id="CP000886">
    <property type="protein sequence ID" value="ABX70436.1"/>
    <property type="molecule type" value="Genomic_DNA"/>
</dbReference>
<dbReference type="RefSeq" id="WP_000934317.1">
    <property type="nucleotide sequence ID" value="NC_010102.1"/>
</dbReference>
<dbReference type="SMR" id="A9N0K7"/>
<dbReference type="KEGG" id="spq:SPAB_05155"/>
<dbReference type="PATRIC" id="fig|1016998.12.peg.4829"/>
<dbReference type="HOGENOM" id="CLU_142729_0_0_6"/>
<dbReference type="BioCyc" id="SENT1016998:SPAB_RS20980-MONOMER"/>
<dbReference type="Proteomes" id="UP000008556">
    <property type="component" value="Chromosome"/>
</dbReference>
<dbReference type="GO" id="GO:0005737">
    <property type="term" value="C:cytoplasm"/>
    <property type="evidence" value="ECO:0007669"/>
    <property type="project" value="UniProtKB-SubCell"/>
</dbReference>
<dbReference type="GO" id="GO:0006355">
    <property type="term" value="P:regulation of DNA-templated transcription"/>
    <property type="evidence" value="ECO:0007669"/>
    <property type="project" value="InterPro"/>
</dbReference>
<dbReference type="FunFam" id="1.20.120.1370:FF:000001">
    <property type="entry name" value="Regulator of sigma D"/>
    <property type="match status" value="1"/>
</dbReference>
<dbReference type="Gene3D" id="1.20.120.1370">
    <property type="entry name" value="Regulator of RNA polymerase sigma(70) subunit, domain 4"/>
    <property type="match status" value="1"/>
</dbReference>
<dbReference type="HAMAP" id="MF_01181">
    <property type="entry name" value="Rsd"/>
    <property type="match status" value="1"/>
</dbReference>
<dbReference type="InterPro" id="IPR038309">
    <property type="entry name" value="Rsd/AlgQ_sf"/>
</dbReference>
<dbReference type="InterPro" id="IPR023785">
    <property type="entry name" value="Sigma70_reg_Rsd"/>
</dbReference>
<dbReference type="InterPro" id="IPR007448">
    <property type="entry name" value="Sigma70_reg_Rsd_AlgQ"/>
</dbReference>
<dbReference type="NCBIfam" id="NF008723">
    <property type="entry name" value="PRK11718.1"/>
    <property type="match status" value="1"/>
</dbReference>
<dbReference type="Pfam" id="PF04353">
    <property type="entry name" value="Rsd_AlgQ"/>
    <property type="match status" value="1"/>
</dbReference>
<dbReference type="PIRSF" id="PIRSF016548">
    <property type="entry name" value="Rsd_AlgQ"/>
    <property type="match status" value="1"/>
</dbReference>
<comment type="function">
    <text evidence="1">Binds RpoD and negatively regulates RpoD-mediated transcription activation by preventing the interaction between the primary sigma factor RpoD with the catalytic core of the RNA polymerase and with promoter DNA. May be involved in replacement of the RNA polymerase sigma subunit from RpoD to RpoS during the transition from exponential growth to the stationary phase.</text>
</comment>
<comment type="subunit">
    <text evidence="1">Interacts with RpoD.</text>
</comment>
<comment type="subcellular location">
    <subcellularLocation>
        <location evidence="1">Cytoplasm</location>
    </subcellularLocation>
</comment>
<comment type="similarity">
    <text evidence="1">Belongs to the Rsd/AlgQ family.</text>
</comment>
<name>RSD_SALPB</name>
<reference key="1">
    <citation type="submission" date="2007-11" db="EMBL/GenBank/DDBJ databases">
        <authorList>
            <consortium name="The Salmonella enterica serovar Paratyphi B Genome Sequencing Project"/>
            <person name="McClelland M."/>
            <person name="Sanderson E.K."/>
            <person name="Porwollik S."/>
            <person name="Spieth J."/>
            <person name="Clifton W.S."/>
            <person name="Fulton R."/>
            <person name="Cordes M."/>
            <person name="Wollam A."/>
            <person name="Shah N."/>
            <person name="Pepin K."/>
            <person name="Bhonagiri V."/>
            <person name="Nash W."/>
            <person name="Johnson M."/>
            <person name="Thiruvilangam P."/>
            <person name="Wilson R."/>
        </authorList>
    </citation>
    <scope>NUCLEOTIDE SEQUENCE [LARGE SCALE GENOMIC DNA]</scope>
    <source>
        <strain>ATCC BAA-1250 / SPB7</strain>
    </source>
</reference>
<evidence type="ECO:0000255" key="1">
    <source>
        <dbReference type="HAMAP-Rule" id="MF_01181"/>
    </source>
</evidence>
<sequence length="162" mass="18652">MLNQLENLTERVGGSNKLVDRWLDVRKHLLVAYYNLVGIKPGKESYMRLNEKALDNFCQSLVDYLSAGHFSIYERILHKLEGNGQLLHAAKIWPLLEDNTQRIMDYYDTSLETAIDHDNCLEFQQALSDIGEALEARFVLEDKLIMLVFDAMHDGARVKRPA</sequence>